<protein>
    <recommendedName>
        <fullName evidence="1">Large ribosomal subunit protein uL22</fullName>
    </recommendedName>
    <alternativeName>
        <fullName evidence="2">50S ribosomal protein L22</fullName>
    </alternativeName>
</protein>
<evidence type="ECO:0000255" key="1">
    <source>
        <dbReference type="HAMAP-Rule" id="MF_01331"/>
    </source>
</evidence>
<evidence type="ECO:0000305" key="2"/>
<organism>
    <name type="scientific">Parafrankia sp. (strain EAN1pec)</name>
    <dbReference type="NCBI Taxonomy" id="298653"/>
    <lineage>
        <taxon>Bacteria</taxon>
        <taxon>Bacillati</taxon>
        <taxon>Actinomycetota</taxon>
        <taxon>Actinomycetes</taxon>
        <taxon>Frankiales</taxon>
        <taxon>Frankiaceae</taxon>
        <taxon>Parafrankia</taxon>
    </lineage>
</organism>
<sequence length="140" mass="15144">MADDLVDGLTRAGLPGAKATARYVHTSPTKARRVVDLVRGRSASEALDILRFAPQAASTDVYKVVASAVANAENNHNLDPATLWIGAAYVDEGPTLKRIRPRAQGRAYRIRKRTSHITVVVESREPVSTGAGARTTRRAR</sequence>
<feature type="chain" id="PRO_0000354475" description="Large ribosomal subunit protein uL22">
    <location>
        <begin position="1"/>
        <end position="140"/>
    </location>
</feature>
<gene>
    <name evidence="1" type="primary">rplV</name>
    <name type="ordered locus">Franean1_6044</name>
</gene>
<proteinExistence type="inferred from homology"/>
<name>RL22_PARS2</name>
<keyword id="KW-0687">Ribonucleoprotein</keyword>
<keyword id="KW-0689">Ribosomal protein</keyword>
<keyword id="KW-0694">RNA-binding</keyword>
<keyword id="KW-0699">rRNA-binding</keyword>
<comment type="function">
    <text evidence="1">This protein binds specifically to 23S rRNA; its binding is stimulated by other ribosomal proteins, e.g. L4, L17, and L20. It is important during the early stages of 50S assembly. It makes multiple contacts with different domains of the 23S rRNA in the assembled 50S subunit and ribosome (By similarity).</text>
</comment>
<comment type="function">
    <text evidence="1">The globular domain of the protein is located near the polypeptide exit tunnel on the outside of the subunit, while an extended beta-hairpin is found that lines the wall of the exit tunnel in the center of the 70S ribosome.</text>
</comment>
<comment type="subunit">
    <text evidence="1">Part of the 50S ribosomal subunit.</text>
</comment>
<comment type="similarity">
    <text evidence="1">Belongs to the universal ribosomal protein uL22 family.</text>
</comment>
<accession>A8LC51</accession>
<reference key="1">
    <citation type="journal article" date="2007" name="Genome Res.">
        <title>Genome characteristics of facultatively symbiotic Frankia sp. strains reflect host range and host plant biogeography.</title>
        <authorList>
            <person name="Normand P."/>
            <person name="Lapierre P."/>
            <person name="Tisa L.S."/>
            <person name="Gogarten J.P."/>
            <person name="Alloisio N."/>
            <person name="Bagnarol E."/>
            <person name="Bassi C.A."/>
            <person name="Berry A.M."/>
            <person name="Bickhart D.M."/>
            <person name="Choisne N."/>
            <person name="Couloux A."/>
            <person name="Cournoyer B."/>
            <person name="Cruveiller S."/>
            <person name="Daubin V."/>
            <person name="Demange N."/>
            <person name="Francino M.P."/>
            <person name="Goltsman E."/>
            <person name="Huang Y."/>
            <person name="Kopp O.R."/>
            <person name="Labarre L."/>
            <person name="Lapidus A."/>
            <person name="Lavire C."/>
            <person name="Marechal J."/>
            <person name="Martinez M."/>
            <person name="Mastronunzio J.E."/>
            <person name="Mullin B.C."/>
            <person name="Niemann J."/>
            <person name="Pujic P."/>
            <person name="Rawnsley T."/>
            <person name="Rouy Z."/>
            <person name="Schenowitz C."/>
            <person name="Sellstedt A."/>
            <person name="Tavares F."/>
            <person name="Tomkins J.P."/>
            <person name="Vallenet D."/>
            <person name="Valverde C."/>
            <person name="Wall L.G."/>
            <person name="Wang Y."/>
            <person name="Medigue C."/>
            <person name="Benson D.R."/>
        </authorList>
    </citation>
    <scope>NUCLEOTIDE SEQUENCE [LARGE SCALE GENOMIC DNA]</scope>
    <source>
        <strain>EAN1pec</strain>
    </source>
</reference>
<dbReference type="EMBL" id="CP000820">
    <property type="protein sequence ID" value="ABW15388.1"/>
    <property type="molecule type" value="Genomic_DNA"/>
</dbReference>
<dbReference type="RefSeq" id="WP_018505127.1">
    <property type="nucleotide sequence ID" value="NC_009921.1"/>
</dbReference>
<dbReference type="SMR" id="A8LC51"/>
<dbReference type="STRING" id="298653.Franean1_6044"/>
<dbReference type="KEGG" id="fre:Franean1_6044"/>
<dbReference type="eggNOG" id="COG0091">
    <property type="taxonomic scope" value="Bacteria"/>
</dbReference>
<dbReference type="HOGENOM" id="CLU_083987_3_2_11"/>
<dbReference type="GO" id="GO:0022625">
    <property type="term" value="C:cytosolic large ribosomal subunit"/>
    <property type="evidence" value="ECO:0007669"/>
    <property type="project" value="TreeGrafter"/>
</dbReference>
<dbReference type="GO" id="GO:0019843">
    <property type="term" value="F:rRNA binding"/>
    <property type="evidence" value="ECO:0007669"/>
    <property type="project" value="UniProtKB-UniRule"/>
</dbReference>
<dbReference type="GO" id="GO:0003735">
    <property type="term" value="F:structural constituent of ribosome"/>
    <property type="evidence" value="ECO:0007669"/>
    <property type="project" value="InterPro"/>
</dbReference>
<dbReference type="GO" id="GO:0006412">
    <property type="term" value="P:translation"/>
    <property type="evidence" value="ECO:0007669"/>
    <property type="project" value="UniProtKB-UniRule"/>
</dbReference>
<dbReference type="CDD" id="cd00336">
    <property type="entry name" value="Ribosomal_L22"/>
    <property type="match status" value="1"/>
</dbReference>
<dbReference type="FunFam" id="3.90.470.10:FF:000002">
    <property type="entry name" value="50S ribosomal protein L22"/>
    <property type="match status" value="1"/>
</dbReference>
<dbReference type="Gene3D" id="3.90.470.10">
    <property type="entry name" value="Ribosomal protein L22/L17"/>
    <property type="match status" value="1"/>
</dbReference>
<dbReference type="HAMAP" id="MF_01331_B">
    <property type="entry name" value="Ribosomal_uL22_B"/>
    <property type="match status" value="1"/>
</dbReference>
<dbReference type="InterPro" id="IPR001063">
    <property type="entry name" value="Ribosomal_uL22"/>
</dbReference>
<dbReference type="InterPro" id="IPR005727">
    <property type="entry name" value="Ribosomal_uL22_bac/chlpt-type"/>
</dbReference>
<dbReference type="InterPro" id="IPR047867">
    <property type="entry name" value="Ribosomal_uL22_bac/org-type"/>
</dbReference>
<dbReference type="InterPro" id="IPR018260">
    <property type="entry name" value="Ribosomal_uL22_CS"/>
</dbReference>
<dbReference type="InterPro" id="IPR036394">
    <property type="entry name" value="Ribosomal_uL22_sf"/>
</dbReference>
<dbReference type="NCBIfam" id="TIGR01044">
    <property type="entry name" value="rplV_bact"/>
    <property type="match status" value="1"/>
</dbReference>
<dbReference type="PANTHER" id="PTHR13501">
    <property type="entry name" value="CHLOROPLAST 50S RIBOSOMAL PROTEIN L22-RELATED"/>
    <property type="match status" value="1"/>
</dbReference>
<dbReference type="PANTHER" id="PTHR13501:SF8">
    <property type="entry name" value="LARGE RIBOSOMAL SUBUNIT PROTEIN UL22M"/>
    <property type="match status" value="1"/>
</dbReference>
<dbReference type="Pfam" id="PF00237">
    <property type="entry name" value="Ribosomal_L22"/>
    <property type="match status" value="1"/>
</dbReference>
<dbReference type="SUPFAM" id="SSF54843">
    <property type="entry name" value="Ribosomal protein L22"/>
    <property type="match status" value="1"/>
</dbReference>
<dbReference type="PROSITE" id="PS00464">
    <property type="entry name" value="RIBOSOMAL_L22"/>
    <property type="match status" value="1"/>
</dbReference>